<name>YJC2_YEAST</name>
<sequence>MGEITPRSLPATNFTGSQFLSSSFCKSVSVLNIVFSAFKHTAEFPESLFRRSPRERGSVFFVTINFEKGSLLCIVVDGRITSLPLGFCDKSVENIFMIWFFY</sequence>
<accession>P47066</accession>
<reference key="1">
    <citation type="journal article" date="1996" name="EMBO J.">
        <title>Complete nucleotide sequence of Saccharomyces cerevisiae chromosome X.</title>
        <authorList>
            <person name="Galibert F."/>
            <person name="Alexandraki D."/>
            <person name="Baur A."/>
            <person name="Boles E."/>
            <person name="Chalwatzis N."/>
            <person name="Chuat J.-C."/>
            <person name="Coster F."/>
            <person name="Cziepluch C."/>
            <person name="de Haan M."/>
            <person name="Domdey H."/>
            <person name="Durand P."/>
            <person name="Entian K.-D."/>
            <person name="Gatius M."/>
            <person name="Goffeau A."/>
            <person name="Grivell L.A."/>
            <person name="Hennemann A."/>
            <person name="Herbert C.J."/>
            <person name="Heumann K."/>
            <person name="Hilger F."/>
            <person name="Hollenberg C.P."/>
            <person name="Huang M.-E."/>
            <person name="Jacq C."/>
            <person name="Jauniaux J.-C."/>
            <person name="Katsoulou C."/>
            <person name="Kirchrath L."/>
            <person name="Kleine K."/>
            <person name="Kordes E."/>
            <person name="Koetter P."/>
            <person name="Liebl S."/>
            <person name="Louis E.J."/>
            <person name="Manus V."/>
            <person name="Mewes H.-W."/>
            <person name="Miosga T."/>
            <person name="Obermaier B."/>
            <person name="Perea J."/>
            <person name="Pohl T.M."/>
            <person name="Portetelle D."/>
            <person name="Pujol A."/>
            <person name="Purnelle B."/>
            <person name="Ramezani Rad M."/>
            <person name="Rasmussen S.W."/>
            <person name="Rose M."/>
            <person name="Rossau R."/>
            <person name="Schaaff-Gerstenschlaeger I."/>
            <person name="Smits P.H.M."/>
            <person name="Scarcez T."/>
            <person name="Soriano N."/>
            <person name="To Van D."/>
            <person name="Tzermia M."/>
            <person name="Van Broekhoven A."/>
            <person name="Vandenbol M."/>
            <person name="Wedler H."/>
            <person name="von Wettstein D."/>
            <person name="Wambutt R."/>
            <person name="Zagulski M."/>
            <person name="Zollner A."/>
            <person name="Karpfinger-Hartl L."/>
        </authorList>
    </citation>
    <scope>NUCLEOTIDE SEQUENCE [LARGE SCALE GENOMIC DNA]</scope>
    <source>
        <strain>ATCC 204508 / S288c</strain>
    </source>
</reference>
<reference key="2">
    <citation type="journal article" date="2014" name="G3 (Bethesda)">
        <title>The reference genome sequence of Saccharomyces cerevisiae: Then and now.</title>
        <authorList>
            <person name="Engel S.R."/>
            <person name="Dietrich F.S."/>
            <person name="Fisk D.G."/>
            <person name="Binkley G."/>
            <person name="Balakrishnan R."/>
            <person name="Costanzo M.C."/>
            <person name="Dwight S.S."/>
            <person name="Hitz B.C."/>
            <person name="Karra K."/>
            <person name="Nash R.S."/>
            <person name="Weng S."/>
            <person name="Wong E.D."/>
            <person name="Lloyd P."/>
            <person name="Skrzypek M.S."/>
            <person name="Miyasato S.R."/>
            <person name="Simison M."/>
            <person name="Cherry J.M."/>
        </authorList>
    </citation>
    <scope>GENOME REANNOTATION</scope>
    <source>
        <strain>ATCC 204508 / S288c</strain>
    </source>
</reference>
<gene>
    <name type="ordered locus">YJL022W</name>
    <name type="ORF">J1284</name>
</gene>
<protein>
    <recommendedName>
        <fullName>Putative uncharacterized protein YJL009W</fullName>
    </recommendedName>
</protein>
<organism>
    <name type="scientific">Saccharomyces cerevisiae (strain ATCC 204508 / S288c)</name>
    <name type="common">Baker's yeast</name>
    <dbReference type="NCBI Taxonomy" id="559292"/>
    <lineage>
        <taxon>Eukaryota</taxon>
        <taxon>Fungi</taxon>
        <taxon>Dikarya</taxon>
        <taxon>Ascomycota</taxon>
        <taxon>Saccharomycotina</taxon>
        <taxon>Saccharomycetes</taxon>
        <taxon>Saccharomycetales</taxon>
        <taxon>Saccharomycetaceae</taxon>
        <taxon>Saccharomyces</taxon>
    </lineage>
</organism>
<comment type="miscellaneous">
    <text evidence="1">Partially overlaps PET130.</text>
</comment>
<comment type="caution">
    <text evidence="2">Product of a dubious gene prediction unlikely to encode a functional protein. Because of that it is not part of the S.cerevisiae S288c complete/reference proteome set.</text>
</comment>
<feature type="chain" id="PRO_0000203073" description="Putative uncharacterized protein YJL009W">
    <location>
        <begin position="1"/>
        <end position="102"/>
    </location>
</feature>
<dbReference type="EMBL" id="Z49298">
    <property type="protein sequence ID" value="CAA89314.1"/>
    <property type="molecule type" value="Genomic_DNA"/>
</dbReference>
<dbReference type="PIR" id="S56794">
    <property type="entry name" value="S56794"/>
</dbReference>
<dbReference type="IntAct" id="P47066">
    <property type="interactions" value="2"/>
</dbReference>
<dbReference type="STRING" id="4932.YJL022W"/>
<dbReference type="PaxDb" id="4932-YJL022W"/>
<dbReference type="EnsemblFungi" id="YJL022W_mRNA">
    <property type="protein sequence ID" value="YJL022W"/>
    <property type="gene ID" value="YJL022W"/>
</dbReference>
<dbReference type="AGR" id="SGD:S000003559"/>
<dbReference type="SGD" id="S000003559">
    <property type="gene designation" value="YJL022W"/>
</dbReference>
<dbReference type="HOGENOM" id="CLU_2279647_0_0_1"/>
<evidence type="ECO:0000305" key="1"/>
<evidence type="ECO:0000305" key="2">
    <source>
    </source>
</evidence>
<proteinExistence type="uncertain"/>